<comment type="function">
    <text evidence="2">Has high formaldehyde dehydrogenase activity in the presence of glutathione and catalyzes the oxidation of normal alcohols in a reaction that is not GSH-dependent. In addition, hemithiolacetals other than those formed from GSH, including omega-thiol fatty acids, also are substrates. Also acts as a S-nitroso-glutathione reductase by catalyzing the NADH-dependent reduction of S-nitrosoglutathione.</text>
</comment>
<comment type="catalytic activity">
    <reaction evidence="2">
        <text>S-(hydroxymethyl)glutathione + NADP(+) = S-formylglutathione + NADPH + H(+)</text>
        <dbReference type="Rhea" id="RHEA:19981"/>
        <dbReference type="ChEBI" id="CHEBI:15378"/>
        <dbReference type="ChEBI" id="CHEBI:57688"/>
        <dbReference type="ChEBI" id="CHEBI:57783"/>
        <dbReference type="ChEBI" id="CHEBI:58349"/>
        <dbReference type="ChEBI" id="CHEBI:58758"/>
        <dbReference type="EC" id="1.1.1.284"/>
    </reaction>
</comment>
<comment type="catalytic activity">
    <reaction evidence="2">
        <text>S-(hydroxymethyl)glutathione + NAD(+) = S-formylglutathione + NADH + H(+)</text>
        <dbReference type="Rhea" id="RHEA:19985"/>
        <dbReference type="ChEBI" id="CHEBI:15378"/>
        <dbReference type="ChEBI" id="CHEBI:57540"/>
        <dbReference type="ChEBI" id="CHEBI:57688"/>
        <dbReference type="ChEBI" id="CHEBI:57945"/>
        <dbReference type="ChEBI" id="CHEBI:58758"/>
        <dbReference type="EC" id="1.1.1.284"/>
    </reaction>
</comment>
<comment type="catalytic activity">
    <reaction evidence="2">
        <text>a primary alcohol + NAD(+) = an aldehyde + NADH + H(+)</text>
        <dbReference type="Rhea" id="RHEA:10736"/>
        <dbReference type="ChEBI" id="CHEBI:15378"/>
        <dbReference type="ChEBI" id="CHEBI:15734"/>
        <dbReference type="ChEBI" id="CHEBI:17478"/>
        <dbReference type="ChEBI" id="CHEBI:57540"/>
        <dbReference type="ChEBI" id="CHEBI:57945"/>
        <dbReference type="EC" id="1.1.1.1"/>
    </reaction>
</comment>
<comment type="catalytic activity">
    <reaction evidence="2">
        <text>a secondary alcohol + NAD(+) = a ketone + NADH + H(+)</text>
        <dbReference type="Rhea" id="RHEA:10740"/>
        <dbReference type="ChEBI" id="CHEBI:15378"/>
        <dbReference type="ChEBI" id="CHEBI:17087"/>
        <dbReference type="ChEBI" id="CHEBI:35681"/>
        <dbReference type="ChEBI" id="CHEBI:57540"/>
        <dbReference type="ChEBI" id="CHEBI:57945"/>
        <dbReference type="EC" id="1.1.1.1"/>
    </reaction>
</comment>
<comment type="catalytic activity">
    <reaction evidence="2">
        <text>S-nitrosoglutathione + NADH + H(+) = S-(hydroxysulfenamide)glutathione + NAD(+)</text>
        <dbReference type="Rhea" id="RHEA:78371"/>
        <dbReference type="ChEBI" id="CHEBI:15378"/>
        <dbReference type="ChEBI" id="CHEBI:57540"/>
        <dbReference type="ChEBI" id="CHEBI:57945"/>
        <dbReference type="ChEBI" id="CHEBI:145544"/>
        <dbReference type="ChEBI" id="CHEBI:229723"/>
    </reaction>
    <physiologicalReaction direction="left-to-right" evidence="2">
        <dbReference type="Rhea" id="RHEA:78372"/>
    </physiologicalReaction>
</comment>
<comment type="cofactor">
    <cofactor evidence="1">
        <name>Zn(2+)</name>
        <dbReference type="ChEBI" id="CHEBI:29105"/>
    </cofactor>
    <text evidence="1">Binds 2 Zn(2+) ions per subunit.</text>
</comment>
<comment type="subunit">
    <text evidence="2">Homodimer.</text>
</comment>
<comment type="subcellular location">
    <subcellularLocation>
        <location evidence="2">Cytoplasm</location>
    </subcellularLocation>
</comment>
<comment type="similarity">
    <text evidence="3">Belongs to the zinc-containing alcohol dehydrogenase family. Class-III subfamily.</text>
</comment>
<accession>A1A835</accession>
<proteinExistence type="inferred from homology"/>
<sequence>MKSRAAVAFAPGKPLEIVEIDVAPPKKGEVLIKVTHTGVCHTDAFTLSGDDPEGVFPVVLGHEGAGVVVEVGEGVTSVKPGDHVIPLYTAECGECEFCRSGKTNLCVAVRETQGKGLMPDGTTRFSYNGQPLYHYMGCSTFSEYTVVAEVSLAKINPEANHEHVCLLGCGVTTGIGAVHNTAKVQPGDSVAVFGLGAIGLAVVQGARQAKAGRIIAIDTNPKKFELARRFGATDCINPNDYDKPIKDVLLDINKWGIDHTFECIGNVNVMRAALESAHRGWGQSVIIGVAGSGQEISTRPFQLVTGRVWKGSAFGGVKGRSQLPGMVEDAMKGDIDLEPFVTHTMSLDEINDAFDLMHEGKSIRTVIRY</sequence>
<dbReference type="EC" id="1.1.1.284"/>
<dbReference type="EC" id="1.1.1.1"/>
<dbReference type="EC" id="1.1.1.-"/>
<dbReference type="EMBL" id="CP000468">
    <property type="protein sequence ID" value="ABI99824.1"/>
    <property type="molecule type" value="Genomic_DNA"/>
</dbReference>
<dbReference type="RefSeq" id="WP_000842109.1">
    <property type="nucleotide sequence ID" value="NZ_CADILS010000037.1"/>
</dbReference>
<dbReference type="SMR" id="A1A835"/>
<dbReference type="KEGG" id="ecv:APECO1_1645"/>
<dbReference type="HOGENOM" id="CLU_026673_14_0_6"/>
<dbReference type="Proteomes" id="UP000008216">
    <property type="component" value="Chromosome"/>
</dbReference>
<dbReference type="GO" id="GO:0005829">
    <property type="term" value="C:cytosol"/>
    <property type="evidence" value="ECO:0007669"/>
    <property type="project" value="TreeGrafter"/>
</dbReference>
<dbReference type="GO" id="GO:0004022">
    <property type="term" value="F:alcohol dehydrogenase (NAD+) activity"/>
    <property type="evidence" value="ECO:0007669"/>
    <property type="project" value="UniProtKB-EC"/>
</dbReference>
<dbReference type="GO" id="GO:0106322">
    <property type="term" value="F:S-(hydroxymethyl)glutathione dehydrogenase (NAD+) activity"/>
    <property type="evidence" value="ECO:0007669"/>
    <property type="project" value="RHEA"/>
</dbReference>
<dbReference type="GO" id="GO:0106321">
    <property type="term" value="F:S-(hydroxymethyl)glutathione dehydrogenase (NADP+) activity"/>
    <property type="evidence" value="ECO:0007669"/>
    <property type="project" value="RHEA"/>
</dbReference>
<dbReference type="GO" id="GO:0080007">
    <property type="term" value="F:S-nitrosoglutathione reductase (NADH) activity"/>
    <property type="evidence" value="ECO:0007669"/>
    <property type="project" value="RHEA"/>
</dbReference>
<dbReference type="GO" id="GO:0008270">
    <property type="term" value="F:zinc ion binding"/>
    <property type="evidence" value="ECO:0007669"/>
    <property type="project" value="InterPro"/>
</dbReference>
<dbReference type="GO" id="GO:0046294">
    <property type="term" value="P:formaldehyde catabolic process"/>
    <property type="evidence" value="ECO:0007669"/>
    <property type="project" value="InterPro"/>
</dbReference>
<dbReference type="CDD" id="cd08300">
    <property type="entry name" value="alcohol_DH_class_III"/>
    <property type="match status" value="1"/>
</dbReference>
<dbReference type="FunFam" id="3.40.50.720:FF:000003">
    <property type="entry name" value="S-(hydroxymethyl)glutathione dehydrogenase"/>
    <property type="match status" value="1"/>
</dbReference>
<dbReference type="FunFam" id="3.90.180.10:FF:000001">
    <property type="entry name" value="S-(hydroxymethyl)glutathione dehydrogenase"/>
    <property type="match status" value="1"/>
</dbReference>
<dbReference type="Gene3D" id="3.90.180.10">
    <property type="entry name" value="Medium-chain alcohol dehydrogenases, catalytic domain"/>
    <property type="match status" value="1"/>
</dbReference>
<dbReference type="Gene3D" id="3.40.50.720">
    <property type="entry name" value="NAD(P)-binding Rossmann-like Domain"/>
    <property type="match status" value="1"/>
</dbReference>
<dbReference type="InterPro" id="IPR013149">
    <property type="entry name" value="ADH-like_C"/>
</dbReference>
<dbReference type="InterPro" id="IPR013154">
    <property type="entry name" value="ADH-like_N"/>
</dbReference>
<dbReference type="InterPro" id="IPR014183">
    <property type="entry name" value="ADH_3"/>
</dbReference>
<dbReference type="InterPro" id="IPR002328">
    <property type="entry name" value="ADH_Zn_CS"/>
</dbReference>
<dbReference type="InterPro" id="IPR011032">
    <property type="entry name" value="GroES-like_sf"/>
</dbReference>
<dbReference type="InterPro" id="IPR036291">
    <property type="entry name" value="NAD(P)-bd_dom_sf"/>
</dbReference>
<dbReference type="InterPro" id="IPR020843">
    <property type="entry name" value="PKS_ER"/>
</dbReference>
<dbReference type="NCBIfam" id="TIGR02818">
    <property type="entry name" value="adh_III_F_hyde"/>
    <property type="match status" value="1"/>
</dbReference>
<dbReference type="PANTHER" id="PTHR43880">
    <property type="entry name" value="ALCOHOL DEHYDROGENASE"/>
    <property type="match status" value="1"/>
</dbReference>
<dbReference type="PANTHER" id="PTHR43880:SF12">
    <property type="entry name" value="ALCOHOL DEHYDROGENASE CLASS-3"/>
    <property type="match status" value="1"/>
</dbReference>
<dbReference type="Pfam" id="PF08240">
    <property type="entry name" value="ADH_N"/>
    <property type="match status" value="1"/>
</dbReference>
<dbReference type="Pfam" id="PF00107">
    <property type="entry name" value="ADH_zinc_N"/>
    <property type="match status" value="1"/>
</dbReference>
<dbReference type="SMART" id="SM00829">
    <property type="entry name" value="PKS_ER"/>
    <property type="match status" value="1"/>
</dbReference>
<dbReference type="SUPFAM" id="SSF50129">
    <property type="entry name" value="GroES-like"/>
    <property type="match status" value="2"/>
</dbReference>
<dbReference type="SUPFAM" id="SSF51735">
    <property type="entry name" value="NAD(P)-binding Rossmann-fold domains"/>
    <property type="match status" value="1"/>
</dbReference>
<dbReference type="PROSITE" id="PS00059">
    <property type="entry name" value="ADH_ZINC"/>
    <property type="match status" value="1"/>
</dbReference>
<protein>
    <recommendedName>
        <fullName>S-(hydroxymethyl)glutathione dehydrogenase</fullName>
        <ecNumber>1.1.1.284</ecNumber>
    </recommendedName>
    <alternativeName>
        <fullName>Alcohol dehydrogenase class-3</fullName>
        <ecNumber>1.1.1.1</ecNumber>
    </alternativeName>
    <alternativeName>
        <fullName>Alcohol dehydrogenase class-III</fullName>
    </alternativeName>
    <alternativeName>
        <fullName>Glutathione-dependent formaldehyde dehydrogenase</fullName>
        <shortName>FALDH</shortName>
        <shortName>FDH</shortName>
        <shortName>GSH-FDH</shortName>
        <ecNumber>1.1.1.-</ecNumber>
    </alternativeName>
</protein>
<organism>
    <name type="scientific">Escherichia coli O1:K1 / APEC</name>
    <dbReference type="NCBI Taxonomy" id="405955"/>
    <lineage>
        <taxon>Bacteria</taxon>
        <taxon>Pseudomonadati</taxon>
        <taxon>Pseudomonadota</taxon>
        <taxon>Gammaproteobacteria</taxon>
        <taxon>Enterobacterales</taxon>
        <taxon>Enterobacteriaceae</taxon>
        <taxon>Escherichia</taxon>
    </lineage>
</organism>
<name>FRMA_ECOK1</name>
<evidence type="ECO:0000250" key="1">
    <source>
        <dbReference type="UniProtKB" id="P11766"/>
    </source>
</evidence>
<evidence type="ECO:0000250" key="2">
    <source>
        <dbReference type="UniProtKB" id="P25437"/>
    </source>
</evidence>
<evidence type="ECO:0000305" key="3"/>
<gene>
    <name type="primary">frmA</name>
    <name type="ordered locus">Ecok1_03310</name>
    <name type="ORF">APECO1_1645</name>
</gene>
<reference key="1">
    <citation type="journal article" date="2007" name="J. Bacteriol.">
        <title>The genome sequence of avian pathogenic Escherichia coli strain O1:K1:H7 shares strong similarities with human extraintestinal pathogenic E. coli genomes.</title>
        <authorList>
            <person name="Johnson T.J."/>
            <person name="Kariyawasam S."/>
            <person name="Wannemuehler Y."/>
            <person name="Mangiamele P."/>
            <person name="Johnson S.J."/>
            <person name="Doetkott C."/>
            <person name="Skyberg J.A."/>
            <person name="Lynne A.M."/>
            <person name="Johnson J.R."/>
            <person name="Nolan L.K."/>
        </authorList>
    </citation>
    <scope>NUCLEOTIDE SEQUENCE [LARGE SCALE GENOMIC DNA]</scope>
</reference>
<keyword id="KW-0963">Cytoplasm</keyword>
<keyword id="KW-0479">Metal-binding</keyword>
<keyword id="KW-0520">NAD</keyword>
<keyword id="KW-0560">Oxidoreductase</keyword>
<keyword id="KW-1185">Reference proteome</keyword>
<keyword id="KW-0862">Zinc</keyword>
<feature type="chain" id="PRO_0000341288" description="S-(hydroxymethyl)glutathione dehydrogenase">
    <location>
        <begin position="1"/>
        <end position="369"/>
    </location>
</feature>
<feature type="binding site" evidence="1">
    <location>
        <position position="40"/>
    </location>
    <ligand>
        <name>Zn(2+)</name>
        <dbReference type="ChEBI" id="CHEBI:29105"/>
        <label>1</label>
        <note>catalytic</note>
    </ligand>
</feature>
<feature type="binding site" evidence="1">
    <location>
        <position position="62"/>
    </location>
    <ligand>
        <name>Zn(2+)</name>
        <dbReference type="ChEBI" id="CHEBI:29105"/>
        <label>1</label>
        <note>catalytic</note>
    </ligand>
</feature>
<feature type="binding site" evidence="1">
    <location>
        <position position="92"/>
    </location>
    <ligand>
        <name>Zn(2+)</name>
        <dbReference type="ChEBI" id="CHEBI:29105"/>
        <label>2</label>
    </ligand>
</feature>
<feature type="binding site" evidence="1">
    <location>
        <position position="95"/>
    </location>
    <ligand>
        <name>Zn(2+)</name>
        <dbReference type="ChEBI" id="CHEBI:29105"/>
        <label>2</label>
    </ligand>
</feature>
<feature type="binding site" evidence="1">
    <location>
        <position position="98"/>
    </location>
    <ligand>
        <name>Zn(2+)</name>
        <dbReference type="ChEBI" id="CHEBI:29105"/>
        <label>2</label>
    </ligand>
</feature>
<feature type="binding site" evidence="1">
    <location>
        <position position="106"/>
    </location>
    <ligand>
        <name>Zn(2+)</name>
        <dbReference type="ChEBI" id="CHEBI:29105"/>
        <label>2</label>
    </ligand>
</feature>
<feature type="binding site" evidence="1">
    <location>
        <position position="169"/>
    </location>
    <ligand>
        <name>Zn(2+)</name>
        <dbReference type="ChEBI" id="CHEBI:29105"/>
        <label>1</label>
        <note>catalytic</note>
    </ligand>
</feature>